<proteinExistence type="inferred from homology"/>
<protein>
    <recommendedName>
        <fullName evidence="1">Mannonate dehydratase</fullName>
        <ecNumber evidence="1">4.2.1.8</ecNumber>
    </recommendedName>
    <alternativeName>
        <fullName evidence="1">D-mannonate hydro-lyase</fullName>
    </alternativeName>
</protein>
<organism>
    <name type="scientific">Lactococcus lactis subsp. cremoris (strain MG1363)</name>
    <dbReference type="NCBI Taxonomy" id="416870"/>
    <lineage>
        <taxon>Bacteria</taxon>
        <taxon>Bacillati</taxon>
        <taxon>Bacillota</taxon>
        <taxon>Bacilli</taxon>
        <taxon>Lactobacillales</taxon>
        <taxon>Streptococcaceae</taxon>
        <taxon>Lactococcus</taxon>
        <taxon>Lactococcus cremoris subsp. cremoris</taxon>
    </lineage>
</organism>
<reference key="1">
    <citation type="journal article" date="2007" name="J. Bacteriol.">
        <title>The complete genome sequence of the lactic acid bacterial paradigm Lactococcus lactis subsp. cremoris MG1363.</title>
        <authorList>
            <person name="Wegmann U."/>
            <person name="O'Connell-Motherway M."/>
            <person name="Zomer A."/>
            <person name="Buist G."/>
            <person name="Shearman C."/>
            <person name="Canchaya C."/>
            <person name="Ventura M."/>
            <person name="Goesmann A."/>
            <person name="Gasson M.J."/>
            <person name="Kuipers O.P."/>
            <person name="van Sinderen D."/>
            <person name="Kok J."/>
        </authorList>
    </citation>
    <scope>NUCLEOTIDE SEQUENCE [LARGE SCALE GENOMIC DNA]</scope>
    <source>
        <strain>MG1363</strain>
    </source>
</reference>
<name>UXUA_LACLM</name>
<evidence type="ECO:0000255" key="1">
    <source>
        <dbReference type="HAMAP-Rule" id="MF_00106"/>
    </source>
</evidence>
<keyword id="KW-0408">Iron</keyword>
<keyword id="KW-0456">Lyase</keyword>
<keyword id="KW-0464">Manganese</keyword>
<dbReference type="EC" id="4.2.1.8" evidence="1"/>
<dbReference type="EMBL" id="AM406671">
    <property type="protein sequence ID" value="CAL97454.1"/>
    <property type="molecule type" value="Genomic_DNA"/>
</dbReference>
<dbReference type="RefSeq" id="WP_011834823.1">
    <property type="nucleotide sequence ID" value="NC_009004.1"/>
</dbReference>
<dbReference type="SMR" id="A2RJK2"/>
<dbReference type="STRING" id="416870.llmg_0859"/>
<dbReference type="KEGG" id="llm:llmg_0859"/>
<dbReference type="eggNOG" id="COG1312">
    <property type="taxonomic scope" value="Bacteria"/>
</dbReference>
<dbReference type="HOGENOM" id="CLU_058621_1_0_9"/>
<dbReference type="OrthoDB" id="9780250at2"/>
<dbReference type="PhylomeDB" id="A2RJK2"/>
<dbReference type="UniPathway" id="UPA00246"/>
<dbReference type="Proteomes" id="UP000000364">
    <property type="component" value="Chromosome"/>
</dbReference>
<dbReference type="GO" id="GO:0008198">
    <property type="term" value="F:ferrous iron binding"/>
    <property type="evidence" value="ECO:0007669"/>
    <property type="project" value="TreeGrafter"/>
</dbReference>
<dbReference type="GO" id="GO:0030145">
    <property type="term" value="F:manganese ion binding"/>
    <property type="evidence" value="ECO:0007669"/>
    <property type="project" value="TreeGrafter"/>
</dbReference>
<dbReference type="GO" id="GO:0008927">
    <property type="term" value="F:mannonate dehydratase activity"/>
    <property type="evidence" value="ECO:0007669"/>
    <property type="project" value="UniProtKB-UniRule"/>
</dbReference>
<dbReference type="GO" id="GO:0042840">
    <property type="term" value="P:D-glucuronate catabolic process"/>
    <property type="evidence" value="ECO:0007669"/>
    <property type="project" value="TreeGrafter"/>
</dbReference>
<dbReference type="Gene3D" id="3.20.20.150">
    <property type="entry name" value="Divalent-metal-dependent TIM barrel enzymes"/>
    <property type="match status" value="1"/>
</dbReference>
<dbReference type="HAMAP" id="MF_00106">
    <property type="entry name" value="UxuA"/>
    <property type="match status" value="1"/>
</dbReference>
<dbReference type="InterPro" id="IPR004628">
    <property type="entry name" value="Man_deHydtase"/>
</dbReference>
<dbReference type="InterPro" id="IPR036237">
    <property type="entry name" value="Xyl_isomerase-like_sf"/>
</dbReference>
<dbReference type="NCBIfam" id="NF003027">
    <property type="entry name" value="PRK03906.1"/>
    <property type="match status" value="1"/>
</dbReference>
<dbReference type="NCBIfam" id="TIGR00695">
    <property type="entry name" value="uxuA"/>
    <property type="match status" value="1"/>
</dbReference>
<dbReference type="PANTHER" id="PTHR30387">
    <property type="entry name" value="MANNONATE DEHYDRATASE"/>
    <property type="match status" value="1"/>
</dbReference>
<dbReference type="PANTHER" id="PTHR30387:SF2">
    <property type="entry name" value="MANNONATE DEHYDRATASE"/>
    <property type="match status" value="1"/>
</dbReference>
<dbReference type="Pfam" id="PF03786">
    <property type="entry name" value="UxuA"/>
    <property type="match status" value="1"/>
</dbReference>
<dbReference type="PIRSF" id="PIRSF016049">
    <property type="entry name" value="Man_dehyd"/>
    <property type="match status" value="1"/>
</dbReference>
<dbReference type="SUPFAM" id="SSF51658">
    <property type="entry name" value="Xylose isomerase-like"/>
    <property type="match status" value="1"/>
</dbReference>
<gene>
    <name evidence="1" type="primary">uxuA</name>
    <name type="ordered locus">llmg_0859</name>
</gene>
<comment type="function">
    <text evidence="1">Catalyzes the dehydration of D-mannonate.</text>
</comment>
<comment type="catalytic activity">
    <reaction evidence="1">
        <text>D-mannonate = 2-dehydro-3-deoxy-D-gluconate + H2O</text>
        <dbReference type="Rhea" id="RHEA:20097"/>
        <dbReference type="ChEBI" id="CHEBI:15377"/>
        <dbReference type="ChEBI" id="CHEBI:17767"/>
        <dbReference type="ChEBI" id="CHEBI:57990"/>
        <dbReference type="EC" id="4.2.1.8"/>
    </reaction>
</comment>
<comment type="cofactor">
    <cofactor evidence="1">
        <name>Fe(2+)</name>
        <dbReference type="ChEBI" id="CHEBI:29033"/>
    </cofactor>
    <cofactor evidence="1">
        <name>Mn(2+)</name>
        <dbReference type="ChEBI" id="CHEBI:29035"/>
    </cofactor>
</comment>
<comment type="pathway">
    <text evidence="1">Carbohydrate metabolism; pentose and glucuronate interconversion.</text>
</comment>
<comment type="similarity">
    <text evidence="1">Belongs to the mannonate dehydratase family.</text>
</comment>
<accession>A2RJK2</accession>
<feature type="chain" id="PRO_1000034333" description="Mannonate dehydratase">
    <location>
        <begin position="1"/>
        <end position="358"/>
    </location>
</feature>
<sequence>MEMTMRWFGSNADKVELSEIAQVPGVKGVVGMIMDIPAGEVWPKERIKALKEEIEAAGLSLKVIESVNIHDDIKIGLPTRDKYIENYKETIRNLAEFGIEVICYNFMPVFDWLKSDLDYRLADNSQTMAFVAEDIPENPQEIIDRVQAADGGFSLPGWEPERLSEVKDLFEAYKNVDEHKLRENFAYFLKAIIPTCEEVGIKMAVHPDDPPYPMFGLPRVVKNREDLDWICNVVDSPSNAITLCTGSIAEDPANNVYEIMAEFVKRDRIPFAHVRNIKFLPSGEKDFYEAPHMSEYGSLDMYKILKAMYDNGFDGYIRPDHGRMIWGETGRPGYGLYDRALGASYLNGLWEALEKNKQ</sequence>